<dbReference type="EMBL" id="BC123448">
    <property type="protein sequence ID" value="AAI23449.1"/>
    <property type="molecule type" value="mRNA"/>
</dbReference>
<dbReference type="RefSeq" id="NP_001071563.1">
    <property type="nucleotide sequence ID" value="NM_001078095.1"/>
</dbReference>
<dbReference type="SMR" id="Q08E31"/>
<dbReference type="FunCoup" id="Q08E31">
    <property type="interactions" value="1860"/>
</dbReference>
<dbReference type="STRING" id="9913.ENSBTAP00000019202"/>
<dbReference type="PaxDb" id="9913-ENSBTAP00000019202"/>
<dbReference type="Ensembl" id="ENSBTAT00000019202.7">
    <property type="protein sequence ID" value="ENSBTAP00000019202.5"/>
    <property type="gene ID" value="ENSBTAG00000014438.7"/>
</dbReference>
<dbReference type="GeneID" id="768207"/>
<dbReference type="KEGG" id="bta:768207"/>
<dbReference type="CTD" id="26039"/>
<dbReference type="VEuPathDB" id="HostDB:ENSBTAG00000014438"/>
<dbReference type="VGNC" id="VGNC:35306">
    <property type="gene designation" value="SS18L1"/>
</dbReference>
<dbReference type="eggNOG" id="KOG3227">
    <property type="taxonomic scope" value="Eukaryota"/>
</dbReference>
<dbReference type="GeneTree" id="ENSGT00940000159853"/>
<dbReference type="HOGENOM" id="CLU_054580_1_0_1"/>
<dbReference type="InParanoid" id="Q08E31"/>
<dbReference type="OMA" id="ASEPMNQ"/>
<dbReference type="OrthoDB" id="10265171at2759"/>
<dbReference type="TreeFam" id="TF330999"/>
<dbReference type="Proteomes" id="UP000009136">
    <property type="component" value="Chromosome 13"/>
</dbReference>
<dbReference type="Bgee" id="ENSBTAG00000014438">
    <property type="expression patterns" value="Expressed in retina and 105 other cell types or tissues"/>
</dbReference>
<dbReference type="GO" id="GO:0005829">
    <property type="term" value="C:cytosol"/>
    <property type="evidence" value="ECO:0007669"/>
    <property type="project" value="Ensembl"/>
</dbReference>
<dbReference type="GO" id="GO:0000776">
    <property type="term" value="C:kinetochore"/>
    <property type="evidence" value="ECO:0007669"/>
    <property type="project" value="UniProtKB-KW"/>
</dbReference>
<dbReference type="GO" id="GO:0071565">
    <property type="term" value="C:nBAF complex"/>
    <property type="evidence" value="ECO:0007669"/>
    <property type="project" value="Ensembl"/>
</dbReference>
<dbReference type="GO" id="GO:0005654">
    <property type="term" value="C:nucleoplasm"/>
    <property type="evidence" value="ECO:0007669"/>
    <property type="project" value="Ensembl"/>
</dbReference>
<dbReference type="GO" id="GO:0005634">
    <property type="term" value="C:nucleus"/>
    <property type="evidence" value="ECO:0000250"/>
    <property type="project" value="UniProtKB"/>
</dbReference>
<dbReference type="GO" id="GO:0003713">
    <property type="term" value="F:transcription coactivator activity"/>
    <property type="evidence" value="ECO:0000318"/>
    <property type="project" value="GO_Central"/>
</dbReference>
<dbReference type="GO" id="GO:0006325">
    <property type="term" value="P:chromatin organization"/>
    <property type="evidence" value="ECO:0007669"/>
    <property type="project" value="UniProtKB-KW"/>
</dbReference>
<dbReference type="GO" id="GO:0016358">
    <property type="term" value="P:dendrite development"/>
    <property type="evidence" value="ECO:0007669"/>
    <property type="project" value="Ensembl"/>
</dbReference>
<dbReference type="GO" id="GO:0050775">
    <property type="term" value="P:positive regulation of dendrite morphogenesis"/>
    <property type="evidence" value="ECO:0000318"/>
    <property type="project" value="GO_Central"/>
</dbReference>
<dbReference type="GO" id="GO:0045893">
    <property type="term" value="P:positive regulation of DNA-templated transcription"/>
    <property type="evidence" value="ECO:0000250"/>
    <property type="project" value="UniProtKB"/>
</dbReference>
<dbReference type="GO" id="GO:0045944">
    <property type="term" value="P:positive regulation of transcription by RNA polymerase II"/>
    <property type="evidence" value="ECO:0000318"/>
    <property type="project" value="GO_Central"/>
</dbReference>
<dbReference type="InterPro" id="IPR007726">
    <property type="entry name" value="SS18_N"/>
</dbReference>
<dbReference type="PANTHER" id="PTHR23107:SF21">
    <property type="entry name" value="CALCIUM-RESPONSIVE TRANSACTIVATOR"/>
    <property type="match status" value="1"/>
</dbReference>
<dbReference type="PANTHER" id="PTHR23107">
    <property type="entry name" value="SYNOVIAL SARCOMA ASSOCIATED SS18 PROTEIN"/>
    <property type="match status" value="1"/>
</dbReference>
<dbReference type="Pfam" id="PF05030">
    <property type="entry name" value="SSXT"/>
    <property type="match status" value="1"/>
</dbReference>
<keyword id="KW-0010">Activator</keyword>
<keyword id="KW-0106">Calcium</keyword>
<keyword id="KW-0137">Centromere</keyword>
<keyword id="KW-0156">Chromatin regulator</keyword>
<keyword id="KW-0158">Chromosome</keyword>
<keyword id="KW-0995">Kinetochore</keyword>
<keyword id="KW-0539">Nucleus</keyword>
<keyword id="KW-1185">Reference proteome</keyword>
<keyword id="KW-0677">Repeat</keyword>
<keyword id="KW-0804">Transcription</keyword>
<keyword id="KW-0805">Transcription regulation</keyword>
<sequence>MSVAFASARPRGKGEVTQQTIQKMLDENHHLIQCILDYQSKGKTAECTQYQQILHRNLVYLATIADSNQNMQSLLPAPPTQSMTLGPGGLSQSGSAQGLHSQGSLSDAIGAGLPPSSLMQAQIGNGPNHVSLQQTAQSTLPTTSMSMSGSGHGSGPGYSHSGPASQSVPLQSQGAISNYVSRANINMQSNPVSMMHQQAASSHYSAAQGGSQHYQGQSMAMMGQSGQGGGVMGQRPMAPYRPSQQGSSQQYLGQEEYYGGEQYGHGQAASEPMSQQYYPDGHGDYAYQPASYTDQSYDRSFEDSTQHYYEGGNSQYSQQQTGYQQGTAQQQTYSQQQYPNQQSYPGQQQGYGPAQGAPSQYSSYQQGQGQQYGSYRASQTGPSTQQQRPYGYEQGQYGNYQQ</sequence>
<protein>
    <recommendedName>
        <fullName>Calcium-responsive transactivator</fullName>
    </recommendedName>
    <alternativeName>
        <fullName>SS18-like protein 1</fullName>
    </alternativeName>
</protein>
<accession>Q08E31</accession>
<comment type="function">
    <text evidence="1">Transcriptional activator which is required for calcium-dependent dendritic growth and branching in cortical neurons. Recruits CREB-binding protein (CREBBP) to nuclear bodies. Component of the CREST-BRG1 complex, a multiprotein complex that regulates promoter activation by orchestrating a calcium-dependent release of a repressor complex and a recruitment of an activator complex. In resting neurons, transcription of the c-FOS promoter is inhibited by BRG1-dependent recruitment of a phospho-RB1-HDAC1 repressor complex. Upon calcium influx, RB1 is dephosphorylated by calcineurin, which leads to release of the repressor complex. At the same time, there is increased recruitment of CREBBP to the promoter by a CREST-dependent mechanism, which leads to transcriptional activation. The CREST-BRG1 complex also binds to the NR2B promoter, and activity-dependent induction of NR2B expression involves a release of HDAC1 and recruitment of CREBBP (By similarity).</text>
</comment>
<comment type="subunit">
    <text evidence="1">Homodimer. Dimerization may be necessary for its function in neuronal dendritic development. Interacts (via C-terminus) with CREBBP (via N-terminus), EP300 and SMARCA4/BRG1. Interacts with the nBAF complex. Association with CREBBP facilitates transcription while the association with SMARCA4/BRG1 suppresses CREST-mediated transcription in resting neurons (By similarity).</text>
</comment>
<comment type="subcellular location">
    <subcellularLocation>
        <location evidence="1">Nucleus</location>
    </subcellularLocation>
    <subcellularLocation>
        <location evidence="1">Chromosome</location>
        <location evidence="1">Centromere</location>
        <location evidence="1">Kinetochore</location>
    </subcellularLocation>
    <text evidence="1">Localizes to nuclear bodies. Colocalizes with SGO1 at kinetochore (By similarity).</text>
</comment>
<comment type="domain">
    <text evidence="1">The MFD (multi-functional domain) domain is involved in transcription transactivation, nuclear body targeting and dimerization.</text>
</comment>
<comment type="similarity">
    <text evidence="4">Belongs to the SS18 family.</text>
</comment>
<organism>
    <name type="scientific">Bos taurus</name>
    <name type="common">Bovine</name>
    <dbReference type="NCBI Taxonomy" id="9913"/>
    <lineage>
        <taxon>Eukaryota</taxon>
        <taxon>Metazoa</taxon>
        <taxon>Chordata</taxon>
        <taxon>Craniata</taxon>
        <taxon>Vertebrata</taxon>
        <taxon>Euteleostomi</taxon>
        <taxon>Mammalia</taxon>
        <taxon>Eutheria</taxon>
        <taxon>Laurasiatheria</taxon>
        <taxon>Artiodactyla</taxon>
        <taxon>Ruminantia</taxon>
        <taxon>Pecora</taxon>
        <taxon>Bovidae</taxon>
        <taxon>Bovinae</taxon>
        <taxon>Bos</taxon>
    </lineage>
</organism>
<proteinExistence type="evidence at transcript level"/>
<name>CREST_BOVIN</name>
<evidence type="ECO:0000250" key="1"/>
<evidence type="ECO:0000255" key="2"/>
<evidence type="ECO:0000256" key="3">
    <source>
        <dbReference type="SAM" id="MobiDB-lite"/>
    </source>
</evidence>
<evidence type="ECO:0000305" key="4"/>
<gene>
    <name type="primary">SS18L1</name>
    <name type="synonym">CREST</name>
</gene>
<feature type="chain" id="PRO_0000391345" description="Calcium-responsive transactivator">
    <location>
        <begin position="1"/>
        <end position="402"/>
    </location>
</feature>
<feature type="region of interest" description="N-terminal auto-inhibitory domain; necessary for interaction with SMARCA4/BRG1" evidence="1">
    <location>
        <begin position="1"/>
        <end position="148"/>
    </location>
</feature>
<feature type="region of interest" description="Disordered" evidence="3">
    <location>
        <begin position="72"/>
        <end position="129"/>
    </location>
</feature>
<feature type="region of interest" description="Disordered" evidence="3">
    <location>
        <begin position="141"/>
        <end position="170"/>
    </location>
</feature>
<feature type="region of interest" description="Methionine-rich intra-molecular domain" evidence="1">
    <location>
        <begin position="149"/>
        <end position="237"/>
    </location>
</feature>
<feature type="region of interest" description="Disordered" evidence="3">
    <location>
        <begin position="195"/>
        <end position="250"/>
    </location>
</feature>
<feature type="region of interest" description="MFD domain" evidence="1">
    <location>
        <begin position="251"/>
        <end position="323"/>
    </location>
</feature>
<feature type="region of interest" description="Disordered" evidence="3">
    <location>
        <begin position="262"/>
        <end position="290"/>
    </location>
</feature>
<feature type="region of interest" description="Disordered" evidence="3">
    <location>
        <begin position="305"/>
        <end position="402"/>
    </location>
</feature>
<feature type="region of interest" description="Necessary for nuclear localization" evidence="1">
    <location>
        <begin position="340"/>
        <end position="402"/>
    </location>
</feature>
<feature type="region of interest" description="Necessary for interaction with CREBBP and for the recruitment of CREBBP to the nuclear bodies" evidence="1">
    <location>
        <begin position="393"/>
        <end position="402"/>
    </location>
</feature>
<feature type="short sequence motif" description="SH2-binding" evidence="2">
    <location>
        <begin position="50"/>
        <end position="53"/>
    </location>
</feature>
<feature type="short sequence motif" description="SH2-binding" evidence="2">
    <location>
        <begin position="359"/>
        <end position="362"/>
    </location>
</feature>
<feature type="short sequence motif" description="SH3-binding" evidence="2">
    <location>
        <begin position="377"/>
        <end position="385"/>
    </location>
</feature>
<feature type="short sequence motif" description="SH2-binding" evidence="2">
    <location>
        <begin position="397"/>
        <end position="400"/>
    </location>
</feature>
<feature type="compositionally biased region" description="Low complexity" evidence="3">
    <location>
        <begin position="92"/>
        <end position="106"/>
    </location>
</feature>
<feature type="compositionally biased region" description="Polar residues" evidence="3">
    <location>
        <begin position="117"/>
        <end position="129"/>
    </location>
</feature>
<feature type="compositionally biased region" description="Low complexity" evidence="3">
    <location>
        <begin position="196"/>
        <end position="224"/>
    </location>
</feature>
<feature type="compositionally biased region" description="Low complexity" evidence="3">
    <location>
        <begin position="311"/>
        <end position="379"/>
    </location>
</feature>
<feature type="compositionally biased region" description="Low complexity" evidence="3">
    <location>
        <begin position="390"/>
        <end position="402"/>
    </location>
</feature>
<reference key="1">
    <citation type="submission" date="2006-09" db="EMBL/GenBank/DDBJ databases">
        <authorList>
            <consortium name="NIH - Mammalian Gene Collection (MGC) project"/>
        </authorList>
    </citation>
    <scope>NUCLEOTIDE SEQUENCE [LARGE SCALE MRNA]</scope>
    <source>
        <strain>Hereford</strain>
        <tissue>Hippocampus</tissue>
    </source>
</reference>